<gene>
    <name type="primary">QCT</name>
    <name type="synonym">QC</name>
    <name type="ordered locus">At4g25720</name>
    <name type="ORF">L73G19.100</name>
</gene>
<reference key="1">
    <citation type="journal article" date="1999" name="Nature">
        <title>Sequence and analysis of chromosome 4 of the plant Arabidopsis thaliana.</title>
        <authorList>
            <person name="Mayer K.F.X."/>
            <person name="Schueller C."/>
            <person name="Wambutt R."/>
            <person name="Murphy G."/>
            <person name="Volckaert G."/>
            <person name="Pohl T."/>
            <person name="Duesterhoeft A."/>
            <person name="Stiekema W."/>
            <person name="Entian K.-D."/>
            <person name="Terryn N."/>
            <person name="Harris B."/>
            <person name="Ansorge W."/>
            <person name="Brandt P."/>
            <person name="Grivell L.A."/>
            <person name="Rieger M."/>
            <person name="Weichselgartner M."/>
            <person name="de Simone V."/>
            <person name="Obermaier B."/>
            <person name="Mache R."/>
            <person name="Mueller M."/>
            <person name="Kreis M."/>
            <person name="Delseny M."/>
            <person name="Puigdomenech P."/>
            <person name="Watson M."/>
            <person name="Schmidtheini T."/>
            <person name="Reichert B."/>
            <person name="Portetelle D."/>
            <person name="Perez-Alonso M."/>
            <person name="Boutry M."/>
            <person name="Bancroft I."/>
            <person name="Vos P."/>
            <person name="Hoheisel J."/>
            <person name="Zimmermann W."/>
            <person name="Wedler H."/>
            <person name="Ridley P."/>
            <person name="Langham S.-A."/>
            <person name="McCullagh B."/>
            <person name="Bilham L."/>
            <person name="Robben J."/>
            <person name="van der Schueren J."/>
            <person name="Grymonprez B."/>
            <person name="Chuang Y.-J."/>
            <person name="Vandenbussche F."/>
            <person name="Braeken M."/>
            <person name="Weltjens I."/>
            <person name="Voet M."/>
            <person name="Bastiaens I."/>
            <person name="Aert R."/>
            <person name="Defoor E."/>
            <person name="Weitzenegger T."/>
            <person name="Bothe G."/>
            <person name="Ramsperger U."/>
            <person name="Hilbert H."/>
            <person name="Braun M."/>
            <person name="Holzer E."/>
            <person name="Brandt A."/>
            <person name="Peters S."/>
            <person name="van Staveren M."/>
            <person name="Dirkse W."/>
            <person name="Mooijman P."/>
            <person name="Klein Lankhorst R."/>
            <person name="Rose M."/>
            <person name="Hauf J."/>
            <person name="Koetter P."/>
            <person name="Berneiser S."/>
            <person name="Hempel S."/>
            <person name="Feldpausch M."/>
            <person name="Lamberth S."/>
            <person name="Van den Daele H."/>
            <person name="De Keyser A."/>
            <person name="Buysshaert C."/>
            <person name="Gielen J."/>
            <person name="Villarroel R."/>
            <person name="De Clercq R."/>
            <person name="van Montagu M."/>
            <person name="Rogers J."/>
            <person name="Cronin A."/>
            <person name="Quail M.A."/>
            <person name="Bray-Allen S."/>
            <person name="Clark L."/>
            <person name="Doggett J."/>
            <person name="Hall S."/>
            <person name="Kay M."/>
            <person name="Lennard N."/>
            <person name="McLay K."/>
            <person name="Mayes R."/>
            <person name="Pettett A."/>
            <person name="Rajandream M.A."/>
            <person name="Lyne M."/>
            <person name="Benes V."/>
            <person name="Rechmann S."/>
            <person name="Borkova D."/>
            <person name="Bloecker H."/>
            <person name="Scharfe M."/>
            <person name="Grimm M."/>
            <person name="Loehnert T.-H."/>
            <person name="Dose S."/>
            <person name="de Haan M."/>
            <person name="Maarse A.C."/>
            <person name="Schaefer M."/>
            <person name="Mueller-Auer S."/>
            <person name="Gabel C."/>
            <person name="Fuchs M."/>
            <person name="Fartmann B."/>
            <person name="Granderath K."/>
            <person name="Dauner D."/>
            <person name="Herzl A."/>
            <person name="Neumann S."/>
            <person name="Argiriou A."/>
            <person name="Vitale D."/>
            <person name="Liguori R."/>
            <person name="Piravandi E."/>
            <person name="Massenet O."/>
            <person name="Quigley F."/>
            <person name="Clabauld G."/>
            <person name="Muendlein A."/>
            <person name="Felber R."/>
            <person name="Schnabl S."/>
            <person name="Hiller R."/>
            <person name="Schmidt W."/>
            <person name="Lecharny A."/>
            <person name="Aubourg S."/>
            <person name="Chefdor F."/>
            <person name="Cooke R."/>
            <person name="Berger C."/>
            <person name="Monfort A."/>
            <person name="Casacuberta E."/>
            <person name="Gibbons T."/>
            <person name="Weber N."/>
            <person name="Vandenbol M."/>
            <person name="Bargues M."/>
            <person name="Terol J."/>
            <person name="Torres A."/>
            <person name="Perez-Perez A."/>
            <person name="Purnelle B."/>
            <person name="Bent E."/>
            <person name="Johnson S."/>
            <person name="Tacon D."/>
            <person name="Jesse T."/>
            <person name="Heijnen L."/>
            <person name="Schwarz S."/>
            <person name="Scholler P."/>
            <person name="Heber S."/>
            <person name="Francs P."/>
            <person name="Bielke C."/>
            <person name="Frishman D."/>
            <person name="Haase D."/>
            <person name="Lemcke K."/>
            <person name="Mewes H.-W."/>
            <person name="Stocker S."/>
            <person name="Zaccaria P."/>
            <person name="Bevan M."/>
            <person name="Wilson R.K."/>
            <person name="de la Bastide M."/>
            <person name="Habermann K."/>
            <person name="Parnell L."/>
            <person name="Dedhia N."/>
            <person name="Gnoj L."/>
            <person name="Schutz K."/>
            <person name="Huang E."/>
            <person name="Spiegel L."/>
            <person name="Sekhon M."/>
            <person name="Murray J."/>
            <person name="Sheet P."/>
            <person name="Cordes M."/>
            <person name="Abu-Threideh J."/>
            <person name="Stoneking T."/>
            <person name="Kalicki J."/>
            <person name="Graves T."/>
            <person name="Harmon G."/>
            <person name="Edwards J."/>
            <person name="Latreille P."/>
            <person name="Courtney L."/>
            <person name="Cloud J."/>
            <person name="Abbott A."/>
            <person name="Scott K."/>
            <person name="Johnson D."/>
            <person name="Minx P."/>
            <person name="Bentley D."/>
            <person name="Fulton B."/>
            <person name="Miller N."/>
            <person name="Greco T."/>
            <person name="Kemp K."/>
            <person name="Kramer J."/>
            <person name="Fulton L."/>
            <person name="Mardis E."/>
            <person name="Dante M."/>
            <person name="Pepin K."/>
            <person name="Hillier L.W."/>
            <person name="Nelson J."/>
            <person name="Spieth J."/>
            <person name="Ryan E."/>
            <person name="Andrews S."/>
            <person name="Geisel C."/>
            <person name="Layman D."/>
            <person name="Du H."/>
            <person name="Ali J."/>
            <person name="Berghoff A."/>
            <person name="Jones K."/>
            <person name="Drone K."/>
            <person name="Cotton M."/>
            <person name="Joshu C."/>
            <person name="Antonoiu B."/>
            <person name="Zidanic M."/>
            <person name="Strong C."/>
            <person name="Sun H."/>
            <person name="Lamar B."/>
            <person name="Yordan C."/>
            <person name="Ma P."/>
            <person name="Zhong J."/>
            <person name="Preston R."/>
            <person name="Vil D."/>
            <person name="Shekher M."/>
            <person name="Matero A."/>
            <person name="Shah R."/>
            <person name="Swaby I.K."/>
            <person name="O'Shaughnessy A."/>
            <person name="Rodriguez M."/>
            <person name="Hoffman J."/>
            <person name="Till S."/>
            <person name="Granat S."/>
            <person name="Shohdy N."/>
            <person name="Hasegawa A."/>
            <person name="Hameed A."/>
            <person name="Lodhi M."/>
            <person name="Johnson A."/>
            <person name="Chen E."/>
            <person name="Marra M.A."/>
            <person name="Martienssen R."/>
            <person name="McCombie W.R."/>
        </authorList>
    </citation>
    <scope>NUCLEOTIDE SEQUENCE [LARGE SCALE GENOMIC DNA]</scope>
    <source>
        <strain>cv. Columbia</strain>
    </source>
</reference>
<reference key="2">
    <citation type="journal article" date="2017" name="Plant J.">
        <title>Araport11: a complete reannotation of the Arabidopsis thaliana reference genome.</title>
        <authorList>
            <person name="Cheng C.Y."/>
            <person name="Krishnakumar V."/>
            <person name="Chan A.P."/>
            <person name="Thibaud-Nissen F."/>
            <person name="Schobel S."/>
            <person name="Town C.D."/>
        </authorList>
    </citation>
    <scope>GENOME REANNOTATION</scope>
    <source>
        <strain>cv. Columbia</strain>
    </source>
</reference>
<reference key="3">
    <citation type="journal article" date="2003" name="Science">
        <title>Empirical analysis of transcriptional activity in the Arabidopsis genome.</title>
        <authorList>
            <person name="Yamada K."/>
            <person name="Lim J."/>
            <person name="Dale J.M."/>
            <person name="Chen H."/>
            <person name="Shinn P."/>
            <person name="Palm C.J."/>
            <person name="Southwick A.M."/>
            <person name="Wu H.C."/>
            <person name="Kim C.J."/>
            <person name="Nguyen M."/>
            <person name="Pham P.K."/>
            <person name="Cheuk R.F."/>
            <person name="Karlin-Newmann G."/>
            <person name="Liu S.X."/>
            <person name="Lam B."/>
            <person name="Sakano H."/>
            <person name="Wu T."/>
            <person name="Yu G."/>
            <person name="Miranda M."/>
            <person name="Quach H.L."/>
            <person name="Tripp M."/>
            <person name="Chang C.H."/>
            <person name="Lee J.M."/>
            <person name="Toriumi M.J."/>
            <person name="Chan M.M."/>
            <person name="Tang C.C."/>
            <person name="Onodera C.S."/>
            <person name="Deng J.M."/>
            <person name="Akiyama K."/>
            <person name="Ansari Y."/>
            <person name="Arakawa T."/>
            <person name="Banh J."/>
            <person name="Banno F."/>
            <person name="Bowser L."/>
            <person name="Brooks S.Y."/>
            <person name="Carninci P."/>
            <person name="Chao Q."/>
            <person name="Choy N."/>
            <person name="Enju A."/>
            <person name="Goldsmith A.D."/>
            <person name="Gurjal M."/>
            <person name="Hansen N.F."/>
            <person name="Hayashizaki Y."/>
            <person name="Johnson-Hopson C."/>
            <person name="Hsuan V.W."/>
            <person name="Iida K."/>
            <person name="Karnes M."/>
            <person name="Khan S."/>
            <person name="Koesema E."/>
            <person name="Ishida J."/>
            <person name="Jiang P.X."/>
            <person name="Jones T."/>
            <person name="Kawai J."/>
            <person name="Kamiya A."/>
            <person name="Meyers C."/>
            <person name="Nakajima M."/>
            <person name="Narusaka M."/>
            <person name="Seki M."/>
            <person name="Sakurai T."/>
            <person name="Satou M."/>
            <person name="Tamse R."/>
            <person name="Vaysberg M."/>
            <person name="Wallender E.K."/>
            <person name="Wong C."/>
            <person name="Yamamura Y."/>
            <person name="Yuan S."/>
            <person name="Shinozaki K."/>
            <person name="Davis R.W."/>
            <person name="Theologis A."/>
            <person name="Ecker J.R."/>
        </authorList>
    </citation>
    <scope>NUCLEOTIDE SEQUENCE [LARGE SCALE MRNA] (ISOFORM 1)</scope>
    <source>
        <strain>cv. Columbia</strain>
    </source>
</reference>
<reference key="4">
    <citation type="submission" date="2002-03" db="EMBL/GenBank/DDBJ databases">
        <title>Full-length cDNA from Arabidopsis thaliana.</title>
        <authorList>
            <person name="Brover V.V."/>
            <person name="Troukhan M.E."/>
            <person name="Alexandrov N.A."/>
            <person name="Lu Y.-P."/>
            <person name="Flavell R.B."/>
            <person name="Feldmann K.A."/>
        </authorList>
    </citation>
    <scope>NUCLEOTIDE SEQUENCE [LARGE SCALE MRNA] (ISOFORM 1)</scope>
</reference>
<reference key="5">
    <citation type="journal article" date="2009" name="DNA Res.">
        <title>Analysis of multiple occurrences of alternative splicing events in Arabidopsis thaliana using novel sequenced full-length cDNAs.</title>
        <authorList>
            <person name="Iida K."/>
            <person name="Fukami-Kobayashi K."/>
            <person name="Toyoda A."/>
            <person name="Sakaki Y."/>
            <person name="Kobayashi M."/>
            <person name="Seki M."/>
            <person name="Shinozaki K."/>
        </authorList>
    </citation>
    <scope>NUCLEOTIDE SEQUENCE [LARGE SCALE MRNA] (ISOFORM 1)</scope>
    <source>
        <strain>cv. Columbia</strain>
        <tissue>Flower</tissue>
        <tissue>Silique</tissue>
    </source>
</reference>
<reference key="6">
    <citation type="journal article" date="2007" name="Biol. Chem.">
        <title>Isolation and characterization of the glutaminyl cyclases from Solanum tuberosum and Arabidopsis thaliana: implications for physiological functions.</title>
        <authorList>
            <person name="Schilling S."/>
            <person name="Stenzel I."/>
            <person name="von Bohlen A."/>
            <person name="Wermann M."/>
            <person name="Schulz K."/>
            <person name="Demuth H.-U."/>
            <person name="Wasternack C."/>
        </authorList>
    </citation>
    <scope>FUNCTION</scope>
    <scope>CATALYTIC ACTIVITY</scope>
    <scope>BIOPHYSICOCHEMICAL PROPERTIES</scope>
    <scope>ALTERNATIVE SPLICING</scope>
</reference>
<reference key="7">
    <citation type="journal article" date="2008" name="Plant Physiol.">
        <title>A gamma-glutamyl transpeptidase-independent pathway of glutathione catabolism to glutamate via 5-oxoproline in Arabidopsis.</title>
        <authorList>
            <person name="Ohkama-Ohtsu N."/>
            <person name="Oikawa A."/>
            <person name="Zhao P."/>
            <person name="Xiang C."/>
            <person name="Saito K."/>
            <person name="Oliver D.J."/>
        </authorList>
    </citation>
    <scope>FUNCTION</scope>
    <scope>DISRUPTION PHENOTYPE</scope>
</reference>
<feature type="chain" id="PRO_0000380675" description="Glutaminyl-peptide cyclotransferase">
    <location>
        <begin position="1"/>
        <end position="320"/>
    </location>
</feature>
<feature type="topological domain" description="Cytoplasmic" evidence="1">
    <location>
        <begin position="1"/>
        <end position="36"/>
    </location>
</feature>
<feature type="transmembrane region" description="Helical; Signal-anchor for type II membrane protein" evidence="1">
    <location>
        <begin position="37"/>
        <end position="57"/>
    </location>
</feature>
<feature type="topological domain" description="Lumenal" evidence="1">
    <location>
        <begin position="58"/>
        <end position="320"/>
    </location>
</feature>
<feature type="region of interest" description="Disordered" evidence="2">
    <location>
        <begin position="1"/>
        <end position="22"/>
    </location>
</feature>
<feature type="compositionally biased region" description="Basic residues" evidence="2">
    <location>
        <begin position="1"/>
        <end position="12"/>
    </location>
</feature>
<feature type="glycosylation site" description="N-linked (GlcNAc...) asparagine" evidence="1">
    <location>
        <position position="99"/>
    </location>
</feature>
<feature type="glycosylation site" description="N-linked (GlcNAc...) asparagine" evidence="1">
    <location>
        <position position="163"/>
    </location>
</feature>
<feature type="splice variant" id="VSP_037807" description="In isoform 3." evidence="5">
    <location>
        <begin position="219"/>
        <end position="238"/>
    </location>
</feature>
<feature type="splice variant" id="VSP_037808" description="In isoform 2." evidence="5">
    <original>VTGKLWPK</original>
    <variation>GNKSCYHP</variation>
    <location>
        <begin position="290"/>
        <end position="297"/>
    </location>
</feature>
<feature type="splice variant" id="VSP_037809" description="In isoform 2." evidence="5">
    <location>
        <begin position="299"/>
        <end position="320"/>
    </location>
</feature>
<feature type="sequence conflict" description="In Ref. 4; AAM61216." evidence="5" ref="4">
    <original>G</original>
    <variation>R</variation>
    <location>
        <position position="311"/>
    </location>
</feature>
<organism>
    <name type="scientific">Arabidopsis thaliana</name>
    <name type="common">Mouse-ear cress</name>
    <dbReference type="NCBI Taxonomy" id="3702"/>
    <lineage>
        <taxon>Eukaryota</taxon>
        <taxon>Viridiplantae</taxon>
        <taxon>Streptophyta</taxon>
        <taxon>Embryophyta</taxon>
        <taxon>Tracheophyta</taxon>
        <taxon>Spermatophyta</taxon>
        <taxon>Magnoliopsida</taxon>
        <taxon>eudicotyledons</taxon>
        <taxon>Gunneridae</taxon>
        <taxon>Pentapetalae</taxon>
        <taxon>rosids</taxon>
        <taxon>malvids</taxon>
        <taxon>Brassicales</taxon>
        <taxon>Brassicaceae</taxon>
        <taxon>Camelineae</taxon>
        <taxon>Arabidopsis</taxon>
    </lineage>
</organism>
<proteinExistence type="evidence at protein level"/>
<evidence type="ECO:0000255" key="1"/>
<evidence type="ECO:0000256" key="2">
    <source>
        <dbReference type="SAM" id="MobiDB-lite"/>
    </source>
</evidence>
<evidence type="ECO:0000269" key="3">
    <source>
    </source>
</evidence>
<evidence type="ECO:0000269" key="4">
    <source>
    </source>
</evidence>
<evidence type="ECO:0000305" key="5"/>
<accession>Q84WV9</accession>
<accession>Q2V3F0</accession>
<accession>Q8LFT4</accession>
<accession>Q9T000</accession>
<protein>
    <recommendedName>
        <fullName>Glutaminyl-peptide cyclotransferase</fullName>
        <ecNumber>2.3.2.5</ecNumber>
    </recommendedName>
    <alternativeName>
        <fullName>Glutaminyl cyclase</fullName>
    </alternativeName>
</protein>
<name>QPCT_ARATH</name>
<sequence>MATRSPYKRQTKRSMIQSLPASSSASSRRRFISRKRFAMMIPLALLSGAVFLFFMPFNSWGQSSGSSLDLSHRINEIEVVAEFPHDPDAFTQGLLYAGNDTLFESTGLYGKSSVRKVDLRTGKVEILEKMDNTYFGEGLTLLGERLFQVAWLTNTGFTYDLRNLSKVKPFKHHMKDGWGLATDGKALFGSDGTSTLYRMDPQTMKVTDKHIVRYNGREVRYLNELEYINNEVWANVWQSDCIARISPKDGSLLGWILLSKLSRGLLKSGHRGIDVLNGIAWDSDKQRLFVTGKLWPKLYQIKLKQASAKSGNYIEQQCLV</sequence>
<comment type="function">
    <text evidence="3 4">Converts glutamine and N-terminal glutamyl residues in peptides to 5-oxoproline and 5-oxoproline residues. Not involved in the major pathway for 5-oxoproline production.</text>
</comment>
<comment type="catalytic activity">
    <reaction evidence="3">
        <text>N-terminal L-glutaminyl-[peptide] = N-terminal 5-oxo-L-prolyl-[peptide] + NH4(+)</text>
        <dbReference type="Rhea" id="RHEA:23652"/>
        <dbReference type="Rhea" id="RHEA-COMP:11736"/>
        <dbReference type="Rhea" id="RHEA-COMP:11846"/>
        <dbReference type="ChEBI" id="CHEBI:28938"/>
        <dbReference type="ChEBI" id="CHEBI:64722"/>
        <dbReference type="ChEBI" id="CHEBI:87215"/>
        <dbReference type="EC" id="2.3.2.5"/>
    </reaction>
</comment>
<comment type="biophysicochemical properties">
    <kinetics>
        <KM evidence="3">80 uM for H-Gln-7-amino-4-methylcoumarin</KM>
        <KM evidence="3">28 uM for H-Gln-beta-naphthylamine</KM>
        <KM evidence="3">151 uM for H-Gln-tert-butyl ester</KM>
        <KM evidence="3">480 uM for H-Gln-NH(2)</KM>
        <KM evidence="3">1100 uM for H-Gln-Gly-OH</KM>
        <KM evidence="3">294 uM for H-Gln-Ala-OH</KM>
        <KM evidence="3">53 uM for H-Gln-Gln-OH</KM>
        <KM evidence="3">265 uM for H-Gln-Glu-OH</KM>
        <KM evidence="3">591 uM for H-Gln-Gly-Pro-OH</KM>
        <KM evidence="3">14 uM for H-Gln-Val-Ala-OH</KM>
        <KM evidence="3">106 uM for H-Gln-Phe-Ala-NH(2)</KM>
        <KM evidence="3">80 uM for H-Gln-Glu-Ala-Phe-NH(2)</KM>
        <KM evidence="3">86 uM for H-Gln-Glu-Tyr-Phe-NH(2)</KM>
        <KM evidence="3">60 uM for H-Gln-Lys-Arg-Leu-NH(2)</KM>
        <KM evidence="3">487 uM for H-Gln-Asp-Glu-Leu-NH(2)</KM>
        <text>Requires an unprotonated substrate N-terminus and a protonated basic group of the enzyme for binding and conversion of the glutaminyl substrates.</text>
    </kinetics>
    <phDependence>
        <text evidence="3">Optimum pH is mildly basic for conversion of the glutaminyl substrates and shifted to acidic for cyclization of glutamic acid.</text>
    </phDependence>
</comment>
<comment type="subcellular location">
    <subcellularLocation>
        <location evidence="5">Endoplasmic reticulum membrane</location>
        <topology evidence="5">Single-pass type II membrane protein</topology>
    </subcellularLocation>
</comment>
<comment type="alternative products">
    <event type="alternative splicing"/>
    <isoform>
        <id>Q84WV9-1</id>
        <name>1</name>
        <sequence type="displayed"/>
    </isoform>
    <isoform>
        <id>Q84WV9-2</id>
        <name>2</name>
        <sequence type="described" ref="VSP_037808 VSP_037809"/>
    </isoform>
    <isoform>
        <id>Q84WV9-3</id>
        <name>3</name>
        <sequence type="described" ref="VSP_037807"/>
    </isoform>
</comment>
<comment type="PTM">
    <text>Glycosylated.</text>
</comment>
<comment type="disruption phenotype">
    <text evidence="4">No effect on 5-oxoproline production.</text>
</comment>
<comment type="miscellaneous">
    <text>Has a low metal affinity, in contrast to the mammalian glutaminyl cyclases that contain one zinc ion per molecule.</text>
</comment>
<comment type="similarity">
    <text evidence="5">Belongs to the plant glutaminyl-peptide cyclotransferase family.</text>
</comment>
<comment type="sequence caution" evidence="5">
    <conflict type="erroneous gene model prediction">
        <sequence resource="EMBL-CDS" id="CAB43703"/>
    </conflict>
</comment>
<comment type="sequence caution" evidence="5">
    <conflict type="erroneous gene model prediction">
        <sequence resource="EMBL-CDS" id="CAB81382"/>
    </conflict>
</comment>
<dbReference type="EC" id="2.3.2.5"/>
<dbReference type="EMBL" id="AL050400">
    <property type="protein sequence ID" value="CAB43703.1"/>
    <property type="status" value="ALT_SEQ"/>
    <property type="molecule type" value="Genomic_DNA"/>
</dbReference>
<dbReference type="EMBL" id="AL161563">
    <property type="protein sequence ID" value="CAB81382.1"/>
    <property type="status" value="ALT_SEQ"/>
    <property type="molecule type" value="Genomic_DNA"/>
</dbReference>
<dbReference type="EMBL" id="CP002687">
    <property type="protein sequence ID" value="AEE85103.1"/>
    <property type="molecule type" value="Genomic_DNA"/>
</dbReference>
<dbReference type="EMBL" id="CP002687">
    <property type="protein sequence ID" value="AEE85104.1"/>
    <property type="molecule type" value="Genomic_DNA"/>
</dbReference>
<dbReference type="EMBL" id="CP002687">
    <property type="protein sequence ID" value="AEE85105.1"/>
    <property type="molecule type" value="Genomic_DNA"/>
</dbReference>
<dbReference type="EMBL" id="BT001929">
    <property type="protein sequence ID" value="AAN71928.1"/>
    <property type="molecule type" value="mRNA"/>
</dbReference>
<dbReference type="EMBL" id="AY084653">
    <property type="protein sequence ID" value="AAM61216.1"/>
    <property type="molecule type" value="mRNA"/>
</dbReference>
<dbReference type="EMBL" id="AK316976">
    <property type="protein sequence ID" value="BAH19673.1"/>
    <property type="molecule type" value="mRNA"/>
</dbReference>
<dbReference type="PIR" id="T09564">
    <property type="entry name" value="T09564"/>
</dbReference>
<dbReference type="RefSeq" id="NP_001031716.1">
    <molecule id="Q84WV9-2"/>
    <property type="nucleotide sequence ID" value="NM_001036639.3"/>
</dbReference>
<dbReference type="RefSeq" id="NP_001031717.1">
    <molecule id="Q84WV9-3"/>
    <property type="nucleotide sequence ID" value="NM_001036640.1"/>
</dbReference>
<dbReference type="RefSeq" id="NP_567727.1">
    <molecule id="Q84WV9-1"/>
    <property type="nucleotide sequence ID" value="NM_118704.2"/>
</dbReference>
<dbReference type="SMR" id="Q84WV9"/>
<dbReference type="FunCoup" id="Q84WV9">
    <property type="interactions" value="292"/>
</dbReference>
<dbReference type="STRING" id="3702.Q84WV9"/>
<dbReference type="GlyCosmos" id="Q84WV9">
    <property type="glycosylation" value="2 sites, No reported glycans"/>
</dbReference>
<dbReference type="GlyGen" id="Q84WV9">
    <property type="glycosylation" value="2 sites"/>
</dbReference>
<dbReference type="PaxDb" id="3702-AT4G25720.1"/>
<dbReference type="ProteomicsDB" id="225916">
    <molecule id="Q84WV9-1"/>
</dbReference>
<dbReference type="EnsemblPlants" id="AT4G25720.1">
    <molecule id="Q84WV9-1"/>
    <property type="protein sequence ID" value="AT4G25720.1"/>
    <property type="gene ID" value="AT4G25720"/>
</dbReference>
<dbReference type="EnsemblPlants" id="AT4G25720.2">
    <molecule id="Q84WV9-2"/>
    <property type="protein sequence ID" value="AT4G25720.2"/>
    <property type="gene ID" value="AT4G25720"/>
</dbReference>
<dbReference type="EnsemblPlants" id="AT4G25720.3">
    <molecule id="Q84WV9-3"/>
    <property type="protein sequence ID" value="AT4G25720.3"/>
    <property type="gene ID" value="AT4G25720"/>
</dbReference>
<dbReference type="GeneID" id="828677"/>
<dbReference type="Gramene" id="AT4G25720.1">
    <molecule id="Q84WV9-1"/>
    <property type="protein sequence ID" value="AT4G25720.1"/>
    <property type="gene ID" value="AT4G25720"/>
</dbReference>
<dbReference type="Gramene" id="AT4G25720.2">
    <molecule id="Q84WV9-2"/>
    <property type="protein sequence ID" value="AT4G25720.2"/>
    <property type="gene ID" value="AT4G25720"/>
</dbReference>
<dbReference type="Gramene" id="AT4G25720.3">
    <molecule id="Q84WV9-3"/>
    <property type="protein sequence ID" value="AT4G25720.3"/>
    <property type="gene ID" value="AT4G25720"/>
</dbReference>
<dbReference type="KEGG" id="ath:AT4G25720"/>
<dbReference type="Araport" id="AT4G25720"/>
<dbReference type="TAIR" id="AT4G25720">
    <property type="gene designation" value="QC"/>
</dbReference>
<dbReference type="eggNOG" id="ENOG502QUQC">
    <property type="taxonomic scope" value="Eukaryota"/>
</dbReference>
<dbReference type="HOGENOM" id="CLU_060272_1_0_1"/>
<dbReference type="InParanoid" id="Q84WV9"/>
<dbReference type="OMA" id="NDKLFQV"/>
<dbReference type="OrthoDB" id="409395at2759"/>
<dbReference type="PhylomeDB" id="Q84WV9"/>
<dbReference type="BioCyc" id="ARA:AT4G25720-MONOMER"/>
<dbReference type="PRO" id="PR:Q84WV9"/>
<dbReference type="Proteomes" id="UP000006548">
    <property type="component" value="Chromosome 4"/>
</dbReference>
<dbReference type="ExpressionAtlas" id="Q84WV9">
    <property type="expression patterns" value="baseline and differential"/>
</dbReference>
<dbReference type="GO" id="GO:0005789">
    <property type="term" value="C:endoplasmic reticulum membrane"/>
    <property type="evidence" value="ECO:0007669"/>
    <property type="project" value="UniProtKB-SubCell"/>
</dbReference>
<dbReference type="GO" id="GO:0005886">
    <property type="term" value="C:plasma membrane"/>
    <property type="evidence" value="ECO:0007005"/>
    <property type="project" value="TAIR"/>
</dbReference>
<dbReference type="GO" id="GO:0016603">
    <property type="term" value="F:glutaminyl-peptide cyclotransferase activity"/>
    <property type="evidence" value="ECO:0000314"/>
    <property type="project" value="TAIR"/>
</dbReference>
<dbReference type="GO" id="GO:0017186">
    <property type="term" value="P:peptidyl-pyroglutamic acid biosynthetic process, using glutaminyl-peptide cyclotransferase"/>
    <property type="evidence" value="ECO:0000314"/>
    <property type="project" value="TAIR"/>
</dbReference>
<dbReference type="InterPro" id="IPR007788">
    <property type="entry name" value="QCT"/>
</dbReference>
<dbReference type="InterPro" id="IPR011044">
    <property type="entry name" value="Quino_amine_DH_bsu"/>
</dbReference>
<dbReference type="PANTHER" id="PTHR31270">
    <property type="entry name" value="GLUTAMINYL-PEPTIDE CYCLOTRANSFERASE"/>
    <property type="match status" value="1"/>
</dbReference>
<dbReference type="PANTHER" id="PTHR31270:SF1">
    <property type="entry name" value="GLUTAMINYL-PEPTIDE CYCLOTRANSFERASE"/>
    <property type="match status" value="1"/>
</dbReference>
<dbReference type="Pfam" id="PF05096">
    <property type="entry name" value="Glu_cyclase_2"/>
    <property type="match status" value="1"/>
</dbReference>
<dbReference type="SUPFAM" id="SSF50969">
    <property type="entry name" value="YVTN repeat-like/Quinoprotein amine dehydrogenase"/>
    <property type="match status" value="1"/>
</dbReference>
<keyword id="KW-0012">Acyltransferase</keyword>
<keyword id="KW-0025">Alternative splicing</keyword>
<keyword id="KW-0256">Endoplasmic reticulum</keyword>
<keyword id="KW-0325">Glycoprotein</keyword>
<keyword id="KW-0472">Membrane</keyword>
<keyword id="KW-1185">Reference proteome</keyword>
<keyword id="KW-0735">Signal-anchor</keyword>
<keyword id="KW-0808">Transferase</keyword>
<keyword id="KW-0812">Transmembrane</keyword>
<keyword id="KW-1133">Transmembrane helix</keyword>